<gene>
    <name type="primary">Purb</name>
</gene>
<keyword id="KW-0007">Acetylation</keyword>
<keyword id="KW-0010">Activator</keyword>
<keyword id="KW-0903">Direct protein sequencing</keyword>
<keyword id="KW-0238">DNA-binding</keyword>
<keyword id="KW-0488">Methylation</keyword>
<keyword id="KW-0539">Nucleus</keyword>
<keyword id="KW-0597">Phosphoprotein</keyword>
<keyword id="KW-1185">Reference proteome</keyword>
<keyword id="KW-0678">Repressor</keyword>
<keyword id="KW-0804">Transcription</keyword>
<keyword id="KW-0805">Transcription regulation</keyword>
<organism>
    <name type="scientific">Mus musculus</name>
    <name type="common">Mouse</name>
    <dbReference type="NCBI Taxonomy" id="10090"/>
    <lineage>
        <taxon>Eukaryota</taxon>
        <taxon>Metazoa</taxon>
        <taxon>Chordata</taxon>
        <taxon>Craniata</taxon>
        <taxon>Vertebrata</taxon>
        <taxon>Euteleostomi</taxon>
        <taxon>Mammalia</taxon>
        <taxon>Eutheria</taxon>
        <taxon>Euarchontoglires</taxon>
        <taxon>Glires</taxon>
        <taxon>Rodentia</taxon>
        <taxon>Myomorpha</taxon>
        <taxon>Muroidea</taxon>
        <taxon>Muridae</taxon>
        <taxon>Murinae</taxon>
        <taxon>Mus</taxon>
        <taxon>Mus</taxon>
    </lineage>
</organism>
<evidence type="ECO:0000250" key="1">
    <source>
        <dbReference type="UniProtKB" id="Q68A21"/>
    </source>
</evidence>
<evidence type="ECO:0000250" key="2">
    <source>
        <dbReference type="UniProtKB" id="Q96QR8"/>
    </source>
</evidence>
<evidence type="ECO:0000256" key="3">
    <source>
        <dbReference type="SAM" id="MobiDB-lite"/>
    </source>
</evidence>
<evidence type="ECO:0000269" key="4">
    <source>
    </source>
</evidence>
<evidence type="ECO:0000269" key="5">
    <source>
    </source>
</evidence>
<evidence type="ECO:0000269" key="6">
    <source>
    </source>
</evidence>
<evidence type="ECO:0000269" key="7">
    <source>
    </source>
</evidence>
<evidence type="ECO:0000269" key="8">
    <source>
    </source>
</evidence>
<evidence type="ECO:0000269" key="9">
    <source>
    </source>
</evidence>
<evidence type="ECO:0000269" key="10">
    <source>
    </source>
</evidence>
<evidence type="ECO:0000305" key="11"/>
<evidence type="ECO:0007744" key="12">
    <source>
    </source>
</evidence>
<evidence type="ECO:0007744" key="13">
    <source>
    </source>
</evidence>
<evidence type="ECO:0007744" key="14">
    <source>
    </source>
</evidence>
<evidence type="ECO:0007744" key="15">
    <source>
    </source>
</evidence>
<evidence type="ECO:0007744" key="16">
    <source>
    </source>
</evidence>
<evidence type="ECO:0007744" key="17">
    <source>
    </source>
</evidence>
<evidence type="ECO:0007744" key="18">
    <source>
    </source>
</evidence>
<evidence type="ECO:0007744" key="19">
    <source>
    </source>
</evidence>
<evidence type="ECO:0007744" key="20">
    <source>
    </source>
</evidence>
<name>PURB_MOUSE</name>
<feature type="initiator methionine" description="Removed" evidence="13 16">
    <location>
        <position position="1"/>
    </location>
</feature>
<feature type="chain" id="PRO_0000225616" description="Transcriptional regulator protein Pur-beta">
    <location>
        <begin position="2"/>
        <end position="324"/>
    </location>
</feature>
<feature type="region of interest" description="Disordered" evidence="3">
    <location>
        <begin position="1"/>
        <end position="47"/>
    </location>
</feature>
<feature type="region of interest" description="DNA-binding" evidence="6">
    <location>
        <begin position="37"/>
        <end position="263"/>
    </location>
</feature>
<feature type="region of interest" description="Disordered" evidence="3">
    <location>
        <begin position="297"/>
        <end position="324"/>
    </location>
</feature>
<feature type="compositionally biased region" description="Gly residues" evidence="3">
    <location>
        <begin position="9"/>
        <end position="39"/>
    </location>
</feature>
<feature type="compositionally biased region" description="Basic and acidic residues" evidence="3">
    <location>
        <begin position="297"/>
        <end position="307"/>
    </location>
</feature>
<feature type="compositionally biased region" description="Acidic residues" evidence="3">
    <location>
        <begin position="314"/>
        <end position="324"/>
    </location>
</feature>
<feature type="modified residue" description="N-acetylalanine" evidence="13 16">
    <location>
        <position position="2"/>
    </location>
</feature>
<feature type="modified residue" description="Phosphoserine" evidence="12 13 16">
    <location>
        <position position="6"/>
    </location>
</feature>
<feature type="modified residue" description="Phosphoserine" evidence="12 16">
    <location>
        <position position="8"/>
    </location>
</feature>
<feature type="modified residue" description="Omega-N-methylarginine" evidence="20">
    <location>
        <position position="28"/>
    </location>
</feature>
<feature type="modified residue" description="Phosphothreonine" evidence="14">
    <location>
        <position position="43"/>
    </location>
</feature>
<feature type="modified residue" description="Phosphoserine" evidence="18">
    <location>
        <position position="113"/>
    </location>
</feature>
<feature type="modified residue" description="Omega-N-methylarginine" evidence="20">
    <location>
        <position position="164"/>
    </location>
</feature>
<feature type="modified residue" description="N6-acetyllysine" evidence="19">
    <location>
        <position position="279"/>
    </location>
</feature>
<feature type="modified residue" description="Omega-N-methylarginine" evidence="20">
    <location>
        <position position="306"/>
    </location>
</feature>
<feature type="modified residue" description="Phosphoserine" evidence="13 18">
    <location>
        <position position="310"/>
    </location>
</feature>
<feature type="modified residue" description="Phosphoserine" evidence="12 13 15 16 17 18">
    <location>
        <position position="316"/>
    </location>
</feature>
<feature type="mutagenesis site" description="Reduced transcriptional repression of ACTA2 and MYOCD. No effect on homodimerization and thermal stability. Reduced ssDNA-binding and interaction with MSY1; when associated with A-159 and A-267." evidence="7 9">
    <original>K</original>
    <variation>A</variation>
    <location>
        <position position="82"/>
    </location>
</feature>
<feature type="mutagenesis site" description="Reduced transcriptional repression of ACTA2 and MYOCD. No effect on homodimerization and thermal stability. Reduced ssDNA-binding and interaction with MSY1; when associated with A-82 and A-267." evidence="7 9">
    <original>R</original>
    <variation>A</variation>
    <location>
        <position position="159"/>
    </location>
</feature>
<feature type="mutagenesis site" description="Reduced transcriptional repression of MYOCD." evidence="9">
    <original>G</original>
    <variation>S</variation>
    <location>
        <position position="215"/>
    </location>
</feature>
<feature type="mutagenesis site" description="Reduced transcriptional repression of MYOCD." evidence="9">
    <original>P</original>
    <variation>L</variation>
    <location>
        <position position="223"/>
    </location>
</feature>
<feature type="mutagenesis site" description="Reduced transcriptional repression of ACTA2 and MYOCD and ssDNA-binding. No effect on homodimerization and thermal stability. Increased interaction with MSY1. Reduced ssDNA-binding and interaction with MSY1; when associated with A-82 and A-159." evidence="7 9">
    <original>R</original>
    <variation>A</variation>
    <location>
        <position position="267"/>
    </location>
</feature>
<feature type="mutagenesis site" description="Reduced transcriptional repression of MYOCD." evidence="9">
    <original>R</original>
    <variation>Q</variation>
    <location>
        <position position="297"/>
    </location>
</feature>
<accession>O35295</accession>
<reference key="1">
    <citation type="journal article" date="1997" name="J. Biol. Chem.">
        <title>Sequence of cDNAs encoding components of vascular actin single-stranded DNA-binding factor 2 establish identity to Puralpha and Purbeta.</title>
        <authorList>
            <person name="Kelm R.J. Jr."/>
            <person name="Elder P.K."/>
            <person name="Strauch A.R."/>
            <person name="Getz M.J."/>
        </authorList>
    </citation>
    <scope>NUCLEOTIDE SEQUENCE [MRNA]</scope>
    <scope>FUNCTION</scope>
    <source>
        <strain>C57BL/6 X CBA</strain>
        <tissue>Lung</tissue>
    </source>
</reference>
<reference key="2">
    <citation type="journal article" date="2009" name="PLoS Biol.">
        <title>Lineage-specific biology revealed by a finished genome assembly of the mouse.</title>
        <authorList>
            <person name="Church D.M."/>
            <person name="Goodstadt L."/>
            <person name="Hillier L.W."/>
            <person name="Zody M.C."/>
            <person name="Goldstein S."/>
            <person name="She X."/>
            <person name="Bult C.J."/>
            <person name="Agarwala R."/>
            <person name="Cherry J.L."/>
            <person name="DiCuccio M."/>
            <person name="Hlavina W."/>
            <person name="Kapustin Y."/>
            <person name="Meric P."/>
            <person name="Maglott D."/>
            <person name="Birtle Z."/>
            <person name="Marques A.C."/>
            <person name="Graves T."/>
            <person name="Zhou S."/>
            <person name="Teague B."/>
            <person name="Potamousis K."/>
            <person name="Churas C."/>
            <person name="Place M."/>
            <person name="Herschleb J."/>
            <person name="Runnheim R."/>
            <person name="Forrest D."/>
            <person name="Amos-Landgraf J."/>
            <person name="Schwartz D.C."/>
            <person name="Cheng Z."/>
            <person name="Lindblad-Toh K."/>
            <person name="Eichler E.E."/>
            <person name="Ponting C.P."/>
        </authorList>
    </citation>
    <scope>NUCLEOTIDE SEQUENCE [LARGE SCALE GENOMIC DNA]</scope>
    <source>
        <strain>C57BL/6J</strain>
    </source>
</reference>
<reference key="3">
    <citation type="submission" date="2009-01" db="UniProtKB">
        <authorList>
            <person name="Lubec G."/>
            <person name="Sunyer B."/>
            <person name="Chen W.-Q."/>
        </authorList>
    </citation>
    <scope>PROTEIN SEQUENCE OF 68-82</scope>
    <scope>IDENTIFICATION BY MASS SPECTROMETRY</scope>
    <source>
        <strain>OF1</strain>
        <tissue>Hippocampus</tissue>
    </source>
</reference>
<reference key="4">
    <citation type="journal article" date="1999" name="J. Biol. Chem.">
        <title>Molecular interactions between single-stranded DNA-binding proteins associated with an essential MCAT element in the mouse smooth muscle alpha-actin promoter.</title>
        <authorList>
            <person name="Kelm R.J. Jr."/>
            <person name="Cogan J.G."/>
            <person name="Elder P.K."/>
            <person name="Strauch A.R."/>
            <person name="Getz M.J."/>
        </authorList>
    </citation>
    <scope>SUBUNIT</scope>
</reference>
<reference key="5">
    <citation type="journal article" date="2002" name="J. Biol. Chem.">
        <title>Cryptic MCAT enhancer regulation in fibroblasts and smooth muscle cells. Suppression of TEF-1 mediated activation by the single-stranded DNA-binding proteins, Pur alpha, Pur beta, and MSY1.</title>
        <authorList>
            <person name="Carlini L.E."/>
            <person name="Getz M.J."/>
            <person name="Strauch A.R."/>
            <person name="Kelm R.J. Jr."/>
        </authorList>
    </citation>
    <scope>FUNCTION</scope>
</reference>
<reference key="6">
    <citation type="journal article" date="2003" name="J. Biol. Chem.">
        <title>Structure/function analysis of mouse Purbeta, a single-stranded DNA-binding repressor of vascular smooth muscle alpha-actin gene transcription.</title>
        <authorList>
            <person name="Kelm R.J. Jr."/>
            <person name="Wang S.X."/>
            <person name="Polikandriotis J.A."/>
            <person name="Strauch A.R."/>
        </authorList>
    </citation>
    <scope>FUNCTION</scope>
    <scope>REGION</scope>
</reference>
<reference key="7">
    <citation type="journal article" date="2006" name="Mol. Cell. Proteomics">
        <title>Comprehensive identification of phosphorylation sites in postsynaptic density preparations.</title>
        <authorList>
            <person name="Trinidad J.C."/>
            <person name="Specht C.G."/>
            <person name="Thalhammer A."/>
            <person name="Schoepfer R."/>
            <person name="Burlingame A.L."/>
        </authorList>
    </citation>
    <scope>PHOSPHORYLATION [LARGE SCALE ANALYSIS] AT SER-6; SER-8 AND SER-316</scope>
    <scope>IDENTIFICATION BY MASS SPECTROMETRY [LARGE SCALE ANALYSIS]</scope>
    <source>
        <tissue>Brain</tissue>
    </source>
</reference>
<reference key="8">
    <citation type="journal article" date="2007" name="Proc. Natl. Acad. Sci. U.S.A.">
        <title>Large-scale phosphorylation analysis of mouse liver.</title>
        <authorList>
            <person name="Villen J."/>
            <person name="Beausoleil S.A."/>
            <person name="Gerber S.A."/>
            <person name="Gygi S.P."/>
        </authorList>
    </citation>
    <scope>ACETYLATION [LARGE SCALE ANALYSIS] AT ALA-2</scope>
    <scope>PHOSPHORYLATION [LARGE SCALE ANALYSIS] AT SER-6; SER-310 AND SER-316</scope>
    <scope>CLEAVAGE OF INITIATOR METHIONINE [LARGE SCALE ANALYSIS]</scope>
    <scope>IDENTIFICATION BY MASS SPECTROMETRY [LARGE SCALE ANALYSIS]</scope>
    <source>
        <tissue>Liver</tissue>
    </source>
</reference>
<reference key="9">
    <citation type="journal article" date="2007" name="Science">
        <title>ATM and ATR substrate analysis reveals extensive protein networks responsive to DNA damage.</title>
        <authorList>
            <person name="Matsuoka S."/>
            <person name="Ballif B.A."/>
            <person name="Smogorzewska A."/>
            <person name="McDonald E.R. III"/>
            <person name="Hurov K.E."/>
            <person name="Luo J."/>
            <person name="Bakalarski C.E."/>
            <person name="Zhao Z."/>
            <person name="Solimini N."/>
            <person name="Lerenthal Y."/>
            <person name="Shiloh Y."/>
            <person name="Gygi S.P."/>
            <person name="Elledge S.J."/>
        </authorList>
    </citation>
    <scope>PHOSPHORYLATION [LARGE SCALE ANALYSIS] AT THR-43</scope>
    <scope>IDENTIFICATION BY MASS SPECTROMETRY [LARGE SCALE ANALYSIS]</scope>
    <source>
        <tissue>Embryonic fibroblast</tissue>
    </source>
</reference>
<reference key="10">
    <citation type="journal article" date="2008" name="J. Proteome Res.">
        <title>Specific phosphopeptide enrichment with immobilized titanium ion affinity chromatography adsorbent for phosphoproteome analysis.</title>
        <authorList>
            <person name="Zhou H."/>
            <person name="Ye M."/>
            <person name="Dong J."/>
            <person name="Han G."/>
            <person name="Jiang X."/>
            <person name="Wu R."/>
            <person name="Zou H."/>
        </authorList>
    </citation>
    <scope>PHOSPHORYLATION [LARGE SCALE ANALYSIS] AT SER-316</scope>
    <scope>IDENTIFICATION BY MASS SPECTROMETRY [LARGE SCALE ANALYSIS]</scope>
    <source>
        <tissue>Liver</tissue>
    </source>
</reference>
<reference key="11">
    <citation type="journal article" date="2009" name="Immunity">
        <title>The phagosomal proteome in interferon-gamma-activated macrophages.</title>
        <authorList>
            <person name="Trost M."/>
            <person name="English L."/>
            <person name="Lemieux S."/>
            <person name="Courcelles M."/>
            <person name="Desjardins M."/>
            <person name="Thibault P."/>
        </authorList>
    </citation>
    <scope>PHOSPHORYLATION [LARGE SCALE ANALYSIS] AT SER-316</scope>
    <scope>IDENTIFICATION BY MASS SPECTROMETRY [LARGE SCALE ANALYSIS]</scope>
</reference>
<reference key="12">
    <citation type="journal article" date="2009" name="Mol. Cell. Proteomics">
        <title>Large scale localization of protein phosphorylation by use of electron capture dissociation mass spectrometry.</title>
        <authorList>
            <person name="Sweet S.M."/>
            <person name="Bailey C.M."/>
            <person name="Cunningham D.L."/>
            <person name="Heath J.K."/>
            <person name="Cooper H.J."/>
        </authorList>
    </citation>
    <scope>ACETYLATION [LARGE SCALE ANALYSIS] AT ALA-2</scope>
    <scope>PHOSPHORYLATION [LARGE SCALE ANALYSIS] AT SER-6; SER-8 AND SER-316</scope>
    <scope>CLEAVAGE OF INITIATOR METHIONINE [LARGE SCALE ANALYSIS]</scope>
    <scope>IDENTIFICATION BY MASS SPECTROMETRY [LARGE SCALE ANALYSIS]</scope>
    <source>
        <tissue>Embryonic fibroblast</tissue>
    </source>
</reference>
<reference key="13">
    <citation type="journal article" date="2010" name="Cell">
        <title>A tissue-specific atlas of mouse protein phosphorylation and expression.</title>
        <authorList>
            <person name="Huttlin E.L."/>
            <person name="Jedrychowski M.P."/>
            <person name="Elias J.E."/>
            <person name="Goswami T."/>
            <person name="Rad R."/>
            <person name="Beausoleil S.A."/>
            <person name="Villen J."/>
            <person name="Haas W."/>
            <person name="Sowa M.E."/>
            <person name="Gygi S.P."/>
        </authorList>
    </citation>
    <scope>PHOSPHORYLATION [LARGE SCALE ANALYSIS] AT SER-113; SER-310 AND SER-316</scope>
    <scope>IDENTIFICATION BY MASS SPECTROMETRY [LARGE SCALE ANALYSIS]</scope>
    <source>
        <tissue>Brain</tissue>
        <tissue>Brown adipose tissue</tissue>
        <tissue>Heart</tissue>
        <tissue>Kidney</tissue>
        <tissue>Liver</tissue>
        <tissue>Lung</tissue>
        <tissue>Pancreas</tissue>
        <tissue>Spleen</tissue>
        <tissue>Testis</tissue>
    </source>
</reference>
<reference key="14">
    <citation type="journal article" date="2013" name="Mol. Cell">
        <title>SIRT5-mediated lysine desuccinylation impacts diverse metabolic pathways.</title>
        <authorList>
            <person name="Park J."/>
            <person name="Chen Y."/>
            <person name="Tishkoff D.X."/>
            <person name="Peng C."/>
            <person name="Tan M."/>
            <person name="Dai L."/>
            <person name="Xie Z."/>
            <person name="Zhang Y."/>
            <person name="Zwaans B.M."/>
            <person name="Skinner M.E."/>
            <person name="Lombard D.B."/>
            <person name="Zhao Y."/>
        </authorList>
    </citation>
    <scope>ACETYLATION [LARGE SCALE ANALYSIS] AT LYS-279</scope>
    <scope>IDENTIFICATION BY MASS SPECTROMETRY [LARGE SCALE ANALYSIS]</scope>
    <source>
        <tissue>Embryonic fibroblast</tissue>
    </source>
</reference>
<reference key="15">
    <citation type="journal article" date="2014" name="Mol. Cell. Proteomics">
        <title>Immunoaffinity enrichment and mass spectrometry analysis of protein methylation.</title>
        <authorList>
            <person name="Guo A."/>
            <person name="Gu H."/>
            <person name="Zhou J."/>
            <person name="Mulhern D."/>
            <person name="Wang Y."/>
            <person name="Lee K.A."/>
            <person name="Yang V."/>
            <person name="Aguiar M."/>
            <person name="Kornhauser J."/>
            <person name="Jia X."/>
            <person name="Ren J."/>
            <person name="Beausoleil S.A."/>
            <person name="Silva J.C."/>
            <person name="Vemulapalli V."/>
            <person name="Bedford M.T."/>
            <person name="Comb M.J."/>
        </authorList>
    </citation>
    <scope>METHYLATION [LARGE SCALE ANALYSIS] AT ARG-28; ARG-164 AND ARG-306</scope>
    <scope>IDENTIFICATION BY MASS SPECTROMETRY [LARGE SCALE ANALYSIS]</scope>
    <source>
        <tissue>Brain</tissue>
        <tissue>Embryo</tissue>
    </source>
</reference>
<reference key="16">
    <citation type="journal article" date="2016" name="Biochemistry">
        <title>Electrostatic and Hydrophobic Interactions Mediate Single-Stranded DNA Recognition and Acta2 Repression by Purine-Rich Element-Binding Protein B.</title>
        <authorList>
            <person name="Rumora A.E."/>
            <person name="Ferris L.A."/>
            <person name="Wheeler T.R."/>
            <person name="Kelm R.J. Jr."/>
        </authorList>
    </citation>
    <scope>FUNCTION</scope>
    <scope>SUBUNIT</scope>
    <scope>BIOPHYSICOCHEMICAL PROPERTIES</scope>
    <scope>INTERACTION WITH YBX1</scope>
    <scope>MUTAGENESIS OF LYS-82; ARG-159 AND ARG-267</scope>
</reference>
<reference key="17">
    <citation type="journal article" date="2020" name="Mol. Metab.">
        <title>Purbeta promotes hepatic glucose production by increasing Adcy6 transcription.</title>
        <authorList>
            <person name="Jia L."/>
            <person name="Jiang Y."/>
            <person name="Li X."/>
            <person name="Chen Z."/>
        </authorList>
    </citation>
    <scope>FUNCTION</scope>
    <scope>DISRUPTION PHENOTYPE</scope>
    <scope>INDUCTION</scope>
</reference>
<reference key="18">
    <citation type="journal article" date="2021" name="Mol. Cell. Biochem.">
        <title>Purine-rich element binding protein B attenuates the coactivator function of myocardin by a novel molecular mechanism of smooth muscle gene repression.</title>
        <authorList>
            <person name="Ferris L.A."/>
            <person name="Foote A.T."/>
            <person name="Wang S.X."/>
            <person name="Kelm R.J. Jr."/>
        </authorList>
    </citation>
    <scope>FUNCTION</scope>
    <scope>SUBCELLULAR LOCATION</scope>
    <scope>INTERACTION WITH MYOCD AND SRF</scope>
    <scope>MUTAGENESIS OF LYS-82; ARG-159; GLY-215; PRO-223; ARG-267 AND ARG-297</scope>
</reference>
<proteinExistence type="evidence at protein level"/>
<dbReference type="EMBL" id="AF017630">
    <property type="protein sequence ID" value="AAB71859.1"/>
    <property type="molecule type" value="mRNA"/>
</dbReference>
<dbReference type="EMBL" id="AL646020">
    <property type="status" value="NOT_ANNOTATED_CDS"/>
    <property type="molecule type" value="Genomic_DNA"/>
</dbReference>
<dbReference type="CCDS" id="CCDS24420.1"/>
<dbReference type="RefSeq" id="NP_035351.1">
    <property type="nucleotide sequence ID" value="NM_011221.3"/>
</dbReference>
<dbReference type="SMR" id="O35295"/>
<dbReference type="BioGRID" id="202516">
    <property type="interactions" value="15"/>
</dbReference>
<dbReference type="CORUM" id="O35295"/>
<dbReference type="FunCoup" id="O35295">
    <property type="interactions" value="4304"/>
</dbReference>
<dbReference type="IntAct" id="O35295">
    <property type="interactions" value="9"/>
</dbReference>
<dbReference type="MINT" id="O35295"/>
<dbReference type="STRING" id="10090.ENSMUSP00000136957"/>
<dbReference type="GlyGen" id="O35295">
    <property type="glycosylation" value="1 site, 1 O-linked glycan (1 site)"/>
</dbReference>
<dbReference type="iPTMnet" id="O35295"/>
<dbReference type="PhosphoSitePlus" id="O35295"/>
<dbReference type="SwissPalm" id="O35295"/>
<dbReference type="jPOST" id="O35295"/>
<dbReference type="PaxDb" id="10090-ENSMUSP00000136957"/>
<dbReference type="PeptideAtlas" id="O35295"/>
<dbReference type="ProteomicsDB" id="301982"/>
<dbReference type="Pumba" id="O35295"/>
<dbReference type="Antibodypedia" id="44598">
    <property type="antibodies" value="95 antibodies from 19 providers"/>
</dbReference>
<dbReference type="DNASU" id="19291"/>
<dbReference type="Ensembl" id="ENSMUST00000179343.3">
    <property type="protein sequence ID" value="ENSMUSP00000136957.2"/>
    <property type="gene ID" value="ENSMUSG00000094483.3"/>
</dbReference>
<dbReference type="GeneID" id="19291"/>
<dbReference type="KEGG" id="mmu:19291"/>
<dbReference type="UCSC" id="uc007hyr.3">
    <property type="organism name" value="mouse"/>
</dbReference>
<dbReference type="AGR" id="MGI:1338779"/>
<dbReference type="CTD" id="5814"/>
<dbReference type="MGI" id="MGI:1338779">
    <property type="gene designation" value="Purb"/>
</dbReference>
<dbReference type="VEuPathDB" id="HostDB:ENSMUSG00000094483"/>
<dbReference type="eggNOG" id="KOG3074">
    <property type="taxonomic scope" value="Eukaryota"/>
</dbReference>
<dbReference type="GeneTree" id="ENSGT00950000183162"/>
<dbReference type="HOGENOM" id="CLU_057873_1_1_1"/>
<dbReference type="InParanoid" id="O35295"/>
<dbReference type="OMA" id="AKEDGWS"/>
<dbReference type="OrthoDB" id="523901at2759"/>
<dbReference type="PhylomeDB" id="O35295"/>
<dbReference type="TreeFam" id="TF313701"/>
<dbReference type="BioGRID-ORCS" id="19291">
    <property type="hits" value="5 hits in 79 CRISPR screens"/>
</dbReference>
<dbReference type="CD-CODE" id="764D0258">
    <property type="entry name" value="Neuronal RNP granule"/>
</dbReference>
<dbReference type="ChiTaRS" id="Purb">
    <property type="organism name" value="mouse"/>
</dbReference>
<dbReference type="PRO" id="PR:O35295"/>
<dbReference type="Proteomes" id="UP000000589">
    <property type="component" value="Chromosome 11"/>
</dbReference>
<dbReference type="RNAct" id="O35295">
    <property type="molecule type" value="protein"/>
</dbReference>
<dbReference type="Bgee" id="ENSMUSG00000094483">
    <property type="expression patterns" value="Expressed in lateral septal nucleus and 243 other cell types or tissues"/>
</dbReference>
<dbReference type="GO" id="GO:0005654">
    <property type="term" value="C:nucleoplasm"/>
    <property type="evidence" value="ECO:0007669"/>
    <property type="project" value="Ensembl"/>
</dbReference>
<dbReference type="GO" id="GO:0005634">
    <property type="term" value="C:nucleus"/>
    <property type="evidence" value="ECO:0000314"/>
    <property type="project" value="UniProtKB"/>
</dbReference>
<dbReference type="GO" id="GO:0003700">
    <property type="term" value="F:DNA-binding transcription factor activity"/>
    <property type="evidence" value="ECO:0000314"/>
    <property type="project" value="MGI"/>
</dbReference>
<dbReference type="GO" id="GO:0140297">
    <property type="term" value="F:DNA-binding transcription factor binding"/>
    <property type="evidence" value="ECO:0000353"/>
    <property type="project" value="UniProtKB"/>
</dbReference>
<dbReference type="GO" id="GO:0001227">
    <property type="term" value="F:DNA-binding transcription repressor activity, RNA polymerase II-specific"/>
    <property type="evidence" value="ECO:0000314"/>
    <property type="project" value="UniProtKB"/>
</dbReference>
<dbReference type="GO" id="GO:0003690">
    <property type="term" value="F:double-stranded DNA binding"/>
    <property type="evidence" value="ECO:0000314"/>
    <property type="project" value="MGI"/>
</dbReference>
<dbReference type="GO" id="GO:0003691">
    <property type="term" value="F:double-stranded telomeric DNA binding"/>
    <property type="evidence" value="ECO:0000250"/>
    <property type="project" value="UniProtKB"/>
</dbReference>
<dbReference type="GO" id="GO:0003729">
    <property type="term" value="F:mRNA binding"/>
    <property type="evidence" value="ECO:0000314"/>
    <property type="project" value="UniProtKB"/>
</dbReference>
<dbReference type="GO" id="GO:0032422">
    <property type="term" value="F:purine-rich negative regulatory element binding"/>
    <property type="evidence" value="ECO:0007669"/>
    <property type="project" value="InterPro"/>
</dbReference>
<dbReference type="GO" id="GO:0003723">
    <property type="term" value="F:RNA binding"/>
    <property type="evidence" value="ECO:0000314"/>
    <property type="project" value="MGI"/>
</dbReference>
<dbReference type="GO" id="GO:0000977">
    <property type="term" value="F:RNA polymerase II transcription regulatory region sequence-specific DNA binding"/>
    <property type="evidence" value="ECO:0000314"/>
    <property type="project" value="NTNU_SB"/>
</dbReference>
<dbReference type="GO" id="GO:0003697">
    <property type="term" value="F:single-stranded DNA binding"/>
    <property type="evidence" value="ECO:0000314"/>
    <property type="project" value="UniProtKB"/>
</dbReference>
<dbReference type="GO" id="GO:0046332">
    <property type="term" value="F:SMAD binding"/>
    <property type="evidence" value="ECO:0000314"/>
    <property type="project" value="MGI"/>
</dbReference>
<dbReference type="GO" id="GO:0045892">
    <property type="term" value="P:negative regulation of DNA-templated transcription"/>
    <property type="evidence" value="ECO:0000314"/>
    <property type="project" value="MGI"/>
</dbReference>
<dbReference type="GO" id="GO:0000122">
    <property type="term" value="P:negative regulation of transcription by RNA polymerase II"/>
    <property type="evidence" value="ECO:0000314"/>
    <property type="project" value="NTNU_SB"/>
</dbReference>
<dbReference type="GO" id="GO:0045944">
    <property type="term" value="P:positive regulation of transcription by RNA polymerase II"/>
    <property type="evidence" value="ECO:0000315"/>
    <property type="project" value="UniProtKB"/>
</dbReference>
<dbReference type="FunFam" id="3.10.450.700:FF:000001">
    <property type="entry name" value="Purine-rich element binding protein A"/>
    <property type="match status" value="1"/>
</dbReference>
<dbReference type="FunFam" id="3.30.2450.30:FF:000001">
    <property type="entry name" value="Purine-rich element binding protein A"/>
    <property type="match status" value="1"/>
</dbReference>
<dbReference type="Gene3D" id="3.10.450.700">
    <property type="match status" value="1"/>
</dbReference>
<dbReference type="Gene3D" id="3.30.2450.30">
    <property type="match status" value="1"/>
</dbReference>
<dbReference type="InterPro" id="IPR006628">
    <property type="entry name" value="PUR-bd_fam"/>
</dbReference>
<dbReference type="PANTHER" id="PTHR12611">
    <property type="entry name" value="PUR-TRANSCRIPTIONAL ACTIVATOR"/>
    <property type="match status" value="1"/>
</dbReference>
<dbReference type="PANTHER" id="PTHR12611:SF4">
    <property type="entry name" value="TRANSCRIPTIONAL ACTIVATOR PROTEIN PUR-BETA"/>
    <property type="match status" value="1"/>
</dbReference>
<dbReference type="Pfam" id="PF04845">
    <property type="entry name" value="PurA"/>
    <property type="match status" value="1"/>
</dbReference>
<dbReference type="SMART" id="SM00712">
    <property type="entry name" value="PUR"/>
    <property type="match status" value="3"/>
</dbReference>
<comment type="function">
    <text evidence="1 2 5 6 7 8 9 10">Transcriptional regulator which can act as an activator or a repressor (PubMed:11751932, PubMed:12874279, PubMed:27064749, PubMed:31918924, PubMed:33743134, PubMed:9334258). Represses the transcription of ACTA2 in fibroblasts and smooth muscle cells via its ability to interact with the purine-rich strand of a MCAT-containing element in the 5' flanking region of the gene (PubMed:11751932, PubMed:12874279, PubMed:27064749, PubMed:9334258). Represses the transcription of MYOCD, capable of repressing all isoforms of MYOCD but the magnitude of the repressive effects is most notable for the SMC-specific isoforms (PubMed:33743134). Promotes hepatic glucose production by activating the transcription of ADCY6, leading to cAMP accumulation, increased PKA activity, CREB activation, and increased transcription of PCK1 and G6PC genes (PubMed:31918924). Has capacity to bind repeated elements in single-stranded DNA such as the purine-rich single strand of the PUR element located upstream of the MYC gene (By similarity). Participates in transcriptional and translational regulation of alpha-MHC expression in cardiac myocytes by binding to the purine-rich negative regulatory (PNR) element (By similarity). Modulates constitutive liver galectin-3 gene transcription by binding to its promoter (By similarity). May play a role in the dendritic transport of a subset of mRNAs (By similarity).</text>
</comment>
<comment type="biophysicochemical properties">
    <temperatureDependence>
        <text evidence="7">Thermostable.</text>
    </temperatureDependence>
</comment>
<comment type="subunit">
    <text evidence="4 7 9">Homodimer, heterodimer with PURA and heterotrimer with PURA and YBX1/Y-box protein 1 (PubMed:10318844, PubMed:27064749). Interacts with MYOCD and SRF (PubMed:33743134).</text>
</comment>
<comment type="subcellular location">
    <subcellularLocation>
        <location evidence="9">Nucleus</location>
    </subcellularLocation>
</comment>
<comment type="induction">
    <text evidence="8">By fasting or glucagon.</text>
</comment>
<comment type="disruption phenotype">
    <text evidence="8">Liver-specific knockdown in db/db mice results in a decrease in fasting blood glucose and glucose levels in fed conditions (PubMed:31918924). Mice show reduced glucagon sensitivity and hepatic gluconeogenesis, reduced CREB phosphorylation, reduced expression of PCK1 and G6PC and a significant down-regulation of ADCY6 expression (PubMed:31918924).</text>
</comment>
<comment type="similarity">
    <text evidence="11">Belongs to the PUR DNA-binding protein family.</text>
</comment>
<sequence length="324" mass="33901">MADGDSGSERGGGGGGGGGPGGFQPAPRGGGGGGGGPGGEQETQELASKRLDIQNKRFYLDVKQNAKGRFLKIAEVGAGGSKSRLTLSMAVAAEFRDSLGDFIEHYAQLGPSSPEQLAAGAEEGGGPRRALKSEFLVRENRKYYLDLKENQRGRFLRIRQTVNRGGGGFGGGPGPGGLQSGQTIALPAQGLIEFRDALAKLIDDYGGDEDELAGGPGGGAGGPGGGLYGELPEGTSITVDSKRFFFDVGCNKYGVFLRVSEVKPSYRNAITVPFKAWGKFGGAFCRYADEMKEIQERQRDKLYERRGGGSGGGDESEGEEVDED</sequence>
<protein>
    <recommendedName>
        <fullName>Transcriptional regulator protein Pur-beta</fullName>
    </recommendedName>
    <alternativeName>
        <fullName>Purine-rich element-binding protein B</fullName>
    </alternativeName>
    <alternativeName>
        <fullName>Vascular actin single-stranded DNA-binding factor 2 p44 component</fullName>
    </alternativeName>
</protein>